<name>ALR_GEOKA</name>
<evidence type="ECO:0000255" key="1">
    <source>
        <dbReference type="HAMAP-Rule" id="MF_01201"/>
    </source>
</evidence>
<organism>
    <name type="scientific">Geobacillus kaustophilus (strain HTA426)</name>
    <dbReference type="NCBI Taxonomy" id="235909"/>
    <lineage>
        <taxon>Bacteria</taxon>
        <taxon>Bacillati</taxon>
        <taxon>Bacillota</taxon>
        <taxon>Bacilli</taxon>
        <taxon>Bacillales</taxon>
        <taxon>Anoxybacillaceae</taxon>
        <taxon>Geobacillus</taxon>
        <taxon>Geobacillus thermoleovorans group</taxon>
    </lineage>
</organism>
<accession>Q5L3G4</accession>
<reference key="1">
    <citation type="journal article" date="2004" name="Nucleic Acids Res.">
        <title>Thermoadaptation trait revealed by the genome sequence of thermophilic Geobacillus kaustophilus.</title>
        <authorList>
            <person name="Takami H."/>
            <person name="Takaki Y."/>
            <person name="Chee G.-J."/>
            <person name="Nishi S."/>
            <person name="Shimamura S."/>
            <person name="Suzuki H."/>
            <person name="Matsui S."/>
            <person name="Uchiyama I."/>
        </authorList>
    </citation>
    <scope>NUCLEOTIDE SEQUENCE [LARGE SCALE GENOMIC DNA]</scope>
    <source>
        <strain>HTA426</strain>
    </source>
</reference>
<keyword id="KW-0413">Isomerase</keyword>
<keyword id="KW-0663">Pyridoxal phosphate</keyword>
<keyword id="KW-1185">Reference proteome</keyword>
<sequence>MDEFHRDTWVEIDLDAIYDNVANLRRFLPEGTQIMAVVKANAYGHGDAQVAATALEAGASRLAVAFLDEALALRKKGIDAPILVLGASRPEDVALAAEHRIALTVFRSDWLEKASSLYNGSTPIHFHLKMDTGMGRLGVKDEEETKRIAALIDRHPPFVLEGVYTHFATADEVNTDYFSYQYARFLHMLDWLPSRPPLVHCANSAAALRFSDRAFNMVRFGISMYGLAPSPDIKPLLPYELKEAFSLHSRLVHVKKLQPGEKVSYGATYTAQTEEWIGTIPIGYADGWLRRLQHFHVLVGGQRAPIVGRICMDQCMIRLPEPLPVGTKVTLIGRQGDEVISIDDVARHLGTINYEVPCTIGYRVPRIFFRNKRIMEVRNAVGRG</sequence>
<comment type="function">
    <text evidence="1">Catalyzes the interconversion of L-alanine and D-alanine. May also act on other amino acids.</text>
</comment>
<comment type="catalytic activity">
    <reaction evidence="1">
        <text>L-alanine = D-alanine</text>
        <dbReference type="Rhea" id="RHEA:20249"/>
        <dbReference type="ChEBI" id="CHEBI:57416"/>
        <dbReference type="ChEBI" id="CHEBI:57972"/>
        <dbReference type="EC" id="5.1.1.1"/>
    </reaction>
</comment>
<comment type="cofactor">
    <cofactor evidence="1">
        <name>pyridoxal 5'-phosphate</name>
        <dbReference type="ChEBI" id="CHEBI:597326"/>
    </cofactor>
</comment>
<comment type="pathway">
    <text evidence="1">Amino-acid biosynthesis; D-alanine biosynthesis; D-alanine from L-alanine: step 1/1.</text>
</comment>
<comment type="similarity">
    <text evidence="1">Belongs to the alanine racemase family.</text>
</comment>
<protein>
    <recommendedName>
        <fullName evidence="1">Alanine racemase</fullName>
        <ecNumber evidence="1">5.1.1.1</ecNumber>
    </recommendedName>
</protein>
<feature type="chain" id="PRO_1000065990" description="Alanine racemase">
    <location>
        <begin position="1"/>
        <end position="384"/>
    </location>
</feature>
<feature type="active site" description="Proton acceptor; specific for D-alanine" evidence="1">
    <location>
        <position position="39"/>
    </location>
</feature>
<feature type="active site" description="Proton acceptor; specific for L-alanine" evidence="1">
    <location>
        <position position="265"/>
    </location>
</feature>
<feature type="binding site" evidence="1">
    <location>
        <position position="136"/>
    </location>
    <ligand>
        <name>substrate</name>
    </ligand>
</feature>
<feature type="binding site" evidence="1">
    <location>
        <position position="312"/>
    </location>
    <ligand>
        <name>substrate</name>
    </ligand>
</feature>
<feature type="modified residue" description="N6-(pyridoxal phosphate)lysine" evidence="1">
    <location>
        <position position="39"/>
    </location>
</feature>
<gene>
    <name type="primary">alr</name>
    <name type="ordered locus">GK0231</name>
</gene>
<proteinExistence type="inferred from homology"/>
<dbReference type="EC" id="5.1.1.1" evidence="1"/>
<dbReference type="EMBL" id="BA000043">
    <property type="protein sequence ID" value="BAD74516.1"/>
    <property type="molecule type" value="Genomic_DNA"/>
</dbReference>
<dbReference type="RefSeq" id="WP_011229741.1">
    <property type="nucleotide sequence ID" value="NC_006510.1"/>
</dbReference>
<dbReference type="SMR" id="Q5L3G4"/>
<dbReference type="STRING" id="235909.GK0231"/>
<dbReference type="GeneID" id="32062210"/>
<dbReference type="KEGG" id="gka:GK0231"/>
<dbReference type="eggNOG" id="COG0787">
    <property type="taxonomic scope" value="Bacteria"/>
</dbReference>
<dbReference type="HOGENOM" id="CLU_028393_2_1_9"/>
<dbReference type="UniPathway" id="UPA00042">
    <property type="reaction ID" value="UER00497"/>
</dbReference>
<dbReference type="Proteomes" id="UP000001172">
    <property type="component" value="Chromosome"/>
</dbReference>
<dbReference type="GO" id="GO:0005829">
    <property type="term" value="C:cytosol"/>
    <property type="evidence" value="ECO:0007669"/>
    <property type="project" value="TreeGrafter"/>
</dbReference>
<dbReference type="GO" id="GO:0008784">
    <property type="term" value="F:alanine racemase activity"/>
    <property type="evidence" value="ECO:0007669"/>
    <property type="project" value="UniProtKB-UniRule"/>
</dbReference>
<dbReference type="GO" id="GO:0030170">
    <property type="term" value="F:pyridoxal phosphate binding"/>
    <property type="evidence" value="ECO:0007669"/>
    <property type="project" value="UniProtKB-UniRule"/>
</dbReference>
<dbReference type="GO" id="GO:0030632">
    <property type="term" value="P:D-alanine biosynthetic process"/>
    <property type="evidence" value="ECO:0007669"/>
    <property type="project" value="UniProtKB-UniRule"/>
</dbReference>
<dbReference type="GO" id="GO:0009252">
    <property type="term" value="P:peptidoglycan biosynthetic process"/>
    <property type="evidence" value="ECO:0007669"/>
    <property type="project" value="TreeGrafter"/>
</dbReference>
<dbReference type="CDD" id="cd00430">
    <property type="entry name" value="PLPDE_III_AR"/>
    <property type="match status" value="1"/>
</dbReference>
<dbReference type="FunFam" id="2.40.37.10:FF:000006">
    <property type="entry name" value="Alanine racemase"/>
    <property type="match status" value="1"/>
</dbReference>
<dbReference type="FunFam" id="3.20.20.10:FF:000002">
    <property type="entry name" value="Alanine racemase"/>
    <property type="match status" value="1"/>
</dbReference>
<dbReference type="Gene3D" id="3.20.20.10">
    <property type="entry name" value="Alanine racemase"/>
    <property type="match status" value="1"/>
</dbReference>
<dbReference type="Gene3D" id="2.40.37.10">
    <property type="entry name" value="Lyase, Ornithine Decarboxylase, Chain A, domain 1"/>
    <property type="match status" value="1"/>
</dbReference>
<dbReference type="HAMAP" id="MF_01201">
    <property type="entry name" value="Ala_racemase"/>
    <property type="match status" value="1"/>
</dbReference>
<dbReference type="InterPro" id="IPR000821">
    <property type="entry name" value="Ala_racemase"/>
</dbReference>
<dbReference type="InterPro" id="IPR009006">
    <property type="entry name" value="Ala_racemase/Decarboxylase_C"/>
</dbReference>
<dbReference type="InterPro" id="IPR011079">
    <property type="entry name" value="Ala_racemase_C"/>
</dbReference>
<dbReference type="InterPro" id="IPR001608">
    <property type="entry name" value="Ala_racemase_N"/>
</dbReference>
<dbReference type="InterPro" id="IPR020622">
    <property type="entry name" value="Ala_racemase_pyridoxalP-BS"/>
</dbReference>
<dbReference type="InterPro" id="IPR029066">
    <property type="entry name" value="PLP-binding_barrel"/>
</dbReference>
<dbReference type="NCBIfam" id="TIGR00492">
    <property type="entry name" value="alr"/>
    <property type="match status" value="1"/>
</dbReference>
<dbReference type="PANTHER" id="PTHR30511">
    <property type="entry name" value="ALANINE RACEMASE"/>
    <property type="match status" value="1"/>
</dbReference>
<dbReference type="PANTHER" id="PTHR30511:SF0">
    <property type="entry name" value="ALANINE RACEMASE, CATABOLIC-RELATED"/>
    <property type="match status" value="1"/>
</dbReference>
<dbReference type="Pfam" id="PF00842">
    <property type="entry name" value="Ala_racemase_C"/>
    <property type="match status" value="1"/>
</dbReference>
<dbReference type="Pfam" id="PF01168">
    <property type="entry name" value="Ala_racemase_N"/>
    <property type="match status" value="1"/>
</dbReference>
<dbReference type="PRINTS" id="PR00992">
    <property type="entry name" value="ALARACEMASE"/>
</dbReference>
<dbReference type="SMART" id="SM01005">
    <property type="entry name" value="Ala_racemase_C"/>
    <property type="match status" value="1"/>
</dbReference>
<dbReference type="SUPFAM" id="SSF50621">
    <property type="entry name" value="Alanine racemase C-terminal domain-like"/>
    <property type="match status" value="1"/>
</dbReference>
<dbReference type="SUPFAM" id="SSF51419">
    <property type="entry name" value="PLP-binding barrel"/>
    <property type="match status" value="1"/>
</dbReference>
<dbReference type="PROSITE" id="PS00395">
    <property type="entry name" value="ALANINE_RACEMASE"/>
    <property type="match status" value="1"/>
</dbReference>